<gene>
    <name type="primary">citXG</name>
    <name type="synonym">citG</name>
    <name type="ordered locus">HI_0021</name>
</gene>
<keyword id="KW-0067">ATP-binding</keyword>
<keyword id="KW-0511">Multifunctional enzyme</keyword>
<keyword id="KW-0547">Nucleotide-binding</keyword>
<keyword id="KW-0548">Nucleotidyltransferase</keyword>
<keyword id="KW-1185">Reference proteome</keyword>
<keyword id="KW-0808">Transferase</keyword>
<feature type="chain" id="PRO_0000214682" description="Protein CitXG">
    <location>
        <begin position="1"/>
        <end position="465"/>
    </location>
</feature>
<feature type="region of interest" description="Apo-citrate lyase phosphoribosyl-dephospho-CoA transferase">
    <location>
        <begin position="1"/>
        <end position="182"/>
    </location>
</feature>
<feature type="region of interest" description="2-(5''-triphosphoribosyl)-3'-dephosphocoenzyme-A synthase">
    <location>
        <begin position="183"/>
        <end position="465"/>
    </location>
</feature>
<comment type="function">
    <text evidence="1">Bifunctional enzyme that catalyzes formation of 2-(5''-triphosphoribosyl)-3'-dephosphocoenzyme-A, and then the transfer of this prosthetic group precursor to the apo-acyl carrier protein (gamma chain) of the citrate lyase to yield the holo-acyl carrier protein.</text>
</comment>
<comment type="catalytic activity">
    <reaction>
        <text>apo-[citrate lyase ACP] + 2'-(5''-triphospho-alpha-D-ribosyl)-3'-dephospho-CoA = holo-[citrate lyase ACP] + diphosphate</text>
        <dbReference type="Rhea" id="RHEA:16333"/>
        <dbReference type="Rhea" id="RHEA-COMP:10157"/>
        <dbReference type="Rhea" id="RHEA-COMP:10158"/>
        <dbReference type="ChEBI" id="CHEBI:29999"/>
        <dbReference type="ChEBI" id="CHEBI:33019"/>
        <dbReference type="ChEBI" id="CHEBI:61378"/>
        <dbReference type="ChEBI" id="CHEBI:82683"/>
        <dbReference type="EC" id="2.7.7.61"/>
    </reaction>
</comment>
<comment type="catalytic activity">
    <reaction>
        <text>3'-dephospho-CoA + ATP = 2'-(5''-triphospho-alpha-D-ribosyl)-3'-dephospho-CoA + adenine</text>
        <dbReference type="Rhea" id="RHEA:15117"/>
        <dbReference type="ChEBI" id="CHEBI:16708"/>
        <dbReference type="ChEBI" id="CHEBI:30616"/>
        <dbReference type="ChEBI" id="CHEBI:57328"/>
        <dbReference type="ChEBI" id="CHEBI:61378"/>
        <dbReference type="EC" id="2.4.2.52"/>
    </reaction>
</comment>
<comment type="similarity">
    <text evidence="2">In the N-terminal section; belongs to the CitX family.</text>
</comment>
<comment type="similarity">
    <text evidence="2">In the C-terminal section; belongs to the CitG/MdcB family.</text>
</comment>
<comment type="sequence caution" evidence="2">
    <conflict type="erroneous initiation">
        <sequence resource="EMBL-CDS" id="AAC21699"/>
    </conflict>
    <text>Truncated N-terminus.</text>
</comment>
<dbReference type="EC" id="2.7.7.61"/>
<dbReference type="EC" id="2.4.2.52"/>
<dbReference type="EMBL" id="L42023">
    <property type="protein sequence ID" value="AAC21699.1"/>
    <property type="status" value="ALT_INIT"/>
    <property type="molecule type" value="Genomic_DNA"/>
</dbReference>
<dbReference type="PIR" id="E64140">
    <property type="entry name" value="E64140"/>
</dbReference>
<dbReference type="RefSeq" id="NP_438194.1">
    <property type="nucleotide sequence ID" value="NC_000907.1"/>
</dbReference>
<dbReference type="SMR" id="P44458"/>
<dbReference type="STRING" id="71421.HI_0021"/>
<dbReference type="EnsemblBacteria" id="AAC21699">
    <property type="protein sequence ID" value="AAC21699"/>
    <property type="gene ID" value="HI_0021"/>
</dbReference>
<dbReference type="KEGG" id="hin:HI_0021"/>
<dbReference type="PATRIC" id="fig|71421.8.peg.21"/>
<dbReference type="eggNOG" id="COG1767">
    <property type="taxonomic scope" value="Bacteria"/>
</dbReference>
<dbReference type="eggNOG" id="COG3697">
    <property type="taxonomic scope" value="Bacteria"/>
</dbReference>
<dbReference type="HOGENOM" id="CLU_048409_1_0_6"/>
<dbReference type="OrthoDB" id="114886at2"/>
<dbReference type="PhylomeDB" id="P44458"/>
<dbReference type="Proteomes" id="UP000000579">
    <property type="component" value="Chromosome"/>
</dbReference>
<dbReference type="GO" id="GO:0005524">
    <property type="term" value="F:ATP binding"/>
    <property type="evidence" value="ECO:0007669"/>
    <property type="project" value="UniProtKB-KW"/>
</dbReference>
<dbReference type="GO" id="GO:0050519">
    <property type="term" value="F:holo-citrate lyase synthase activity"/>
    <property type="evidence" value="ECO:0007669"/>
    <property type="project" value="UniProtKB-UniRule"/>
</dbReference>
<dbReference type="GO" id="GO:0046917">
    <property type="term" value="F:triphosphoribosyl-dephospho-CoA synthase activity"/>
    <property type="evidence" value="ECO:0000318"/>
    <property type="project" value="GO_Central"/>
</dbReference>
<dbReference type="GO" id="GO:0051191">
    <property type="term" value="P:prosthetic group biosynthetic process"/>
    <property type="evidence" value="ECO:0000318"/>
    <property type="project" value="GO_Central"/>
</dbReference>
<dbReference type="Gene3D" id="1.10.4200.10">
    <property type="entry name" value="Triphosphoribosyl-dephospho-CoA protein"/>
    <property type="match status" value="1"/>
</dbReference>
<dbReference type="HAMAP" id="MF_00397">
    <property type="entry name" value="CitG"/>
    <property type="match status" value="1"/>
</dbReference>
<dbReference type="HAMAP" id="MF_00398">
    <property type="entry name" value="CitX"/>
    <property type="match status" value="1"/>
</dbReference>
<dbReference type="InterPro" id="IPR002736">
    <property type="entry name" value="CitG"/>
</dbReference>
<dbReference type="InterPro" id="IPR005551">
    <property type="entry name" value="CitX"/>
</dbReference>
<dbReference type="InterPro" id="IPR017551">
    <property type="entry name" value="TriPribosyl-deP-CoA_syn_CitG"/>
</dbReference>
<dbReference type="NCBIfam" id="TIGR03125">
    <property type="entry name" value="citrate_citG"/>
    <property type="match status" value="1"/>
</dbReference>
<dbReference type="NCBIfam" id="TIGR03124">
    <property type="entry name" value="citrate_citX"/>
    <property type="match status" value="1"/>
</dbReference>
<dbReference type="PANTHER" id="PTHR30201:SF2">
    <property type="entry name" value="2-(5''-TRIPHOSPHORIBOSYL)-3'-DEPHOSPHOCOENZYME-A SYNTHASE"/>
    <property type="match status" value="1"/>
</dbReference>
<dbReference type="PANTHER" id="PTHR30201">
    <property type="entry name" value="TRIPHOSPHORIBOSYL-DEPHOSPHO-COA SYNTHASE"/>
    <property type="match status" value="1"/>
</dbReference>
<dbReference type="Pfam" id="PF01874">
    <property type="entry name" value="CitG"/>
    <property type="match status" value="1"/>
</dbReference>
<dbReference type="Pfam" id="PF03802">
    <property type="entry name" value="CitX"/>
    <property type="match status" value="1"/>
</dbReference>
<protein>
    <recommendedName>
        <fullName>Protein CitXG</fullName>
    </recommendedName>
    <domain>
        <recommendedName>
            <fullName>Apo-citrate lyase phosphoribosyl-dephospho-CoA transferase</fullName>
            <ecNumber>2.7.7.61</ecNumber>
        </recommendedName>
        <alternativeName>
            <fullName>Apo-ACP nucleodityltransferase</fullName>
        </alternativeName>
        <alternativeName>
            <fullName>Holo-ACP synthase</fullName>
        </alternativeName>
        <alternativeName>
            <fullName>Holo-citrate lyase synthase</fullName>
        </alternativeName>
    </domain>
    <domain>
        <recommendedName>
            <fullName>2-(5''-triphosphoribosyl)-3'-dephosphocoenzyme-A synthase</fullName>
            <shortName>2-(5''-triphosphoribosyl)-3'-dephospho-CoA synthase</shortName>
            <ecNumber>2.4.2.52</ecNumber>
        </recommendedName>
    </domain>
</protein>
<name>CITXG_HAEIN</name>
<sequence>MQHFFTTFSTEGSKISLEALLNAREERAILQQQLITQYGQTLLCITLTAMGGVKKNALLDYVFTKALENLTALFTQLNITAVKEIIRPLETGHEAYFVLPIDARTLKVLMIELEESIPLARLWDLDVFNAKGNLLSRTDFDLSPRTCLVCGENAKICARTHKHEIDEIVDKIQSLAQNHDFAEHIGEQVYLALIQEARLSPKPGLVDAINNGSHKDMNLHTFEQSAISLKPFFTQFVLKGMMTAHLSENQILSEIRPLGLLAEKAMFKVTDGVNTHKGAIFSFGLVCTAIGRLLAQKSLVQSAVDFDVKLICSLVAQFTQGLTDELKNYPEHLPSTAGVRLFQKYGLTGVRGEAENGFNLIQTLLPQFDEYHQLEWEHRLLILLLNLMAINSDTNVVHRGGLAGLYFIQQTAQDLLTDQHLVTDKTALTQALMKFDTACIERNLSSGGSADLLALTIFFLSFRGN</sequence>
<accession>P44458</accession>
<reference key="1">
    <citation type="journal article" date="1995" name="Science">
        <title>Whole-genome random sequencing and assembly of Haemophilus influenzae Rd.</title>
        <authorList>
            <person name="Fleischmann R.D."/>
            <person name="Adams M.D."/>
            <person name="White O."/>
            <person name="Clayton R.A."/>
            <person name="Kirkness E.F."/>
            <person name="Kerlavage A.R."/>
            <person name="Bult C.J."/>
            <person name="Tomb J.-F."/>
            <person name="Dougherty B.A."/>
            <person name="Merrick J.M."/>
            <person name="McKenney K."/>
            <person name="Sutton G.G."/>
            <person name="FitzHugh W."/>
            <person name="Fields C.A."/>
            <person name="Gocayne J.D."/>
            <person name="Scott J.D."/>
            <person name="Shirley R."/>
            <person name="Liu L.-I."/>
            <person name="Glodek A."/>
            <person name="Kelley J.M."/>
            <person name="Weidman J.F."/>
            <person name="Phillips C.A."/>
            <person name="Spriggs T."/>
            <person name="Hedblom E."/>
            <person name="Cotton M.D."/>
            <person name="Utterback T.R."/>
            <person name="Hanna M.C."/>
            <person name="Nguyen D.T."/>
            <person name="Saudek D.M."/>
            <person name="Brandon R.C."/>
            <person name="Fine L.D."/>
            <person name="Fritchman J.L."/>
            <person name="Fuhrmann J.L."/>
            <person name="Geoghagen N.S.M."/>
            <person name="Gnehm C.L."/>
            <person name="McDonald L.A."/>
            <person name="Small K.V."/>
            <person name="Fraser C.M."/>
            <person name="Smith H.O."/>
            <person name="Venter J.C."/>
        </authorList>
    </citation>
    <scope>NUCLEOTIDE SEQUENCE [LARGE SCALE GENOMIC DNA]</scope>
    <source>
        <strain>ATCC 51907 / DSM 11121 / KW20 / Rd</strain>
    </source>
</reference>
<proteinExistence type="inferred from homology"/>
<evidence type="ECO:0000250" key="1"/>
<evidence type="ECO:0000305" key="2"/>
<organism>
    <name type="scientific">Haemophilus influenzae (strain ATCC 51907 / DSM 11121 / KW20 / Rd)</name>
    <dbReference type="NCBI Taxonomy" id="71421"/>
    <lineage>
        <taxon>Bacteria</taxon>
        <taxon>Pseudomonadati</taxon>
        <taxon>Pseudomonadota</taxon>
        <taxon>Gammaproteobacteria</taxon>
        <taxon>Pasteurellales</taxon>
        <taxon>Pasteurellaceae</taxon>
        <taxon>Haemophilus</taxon>
    </lineage>
</organism>